<proteinExistence type="inferred from homology"/>
<sequence>MTKFIFVTGGVVSSLGKGIAAASIAAILESRGLNVTMLKLDPYINVDPGTMSPFQHGEVFVTDDGAETDLDLGHYERFIDSTMTRRNSFSTGQVYENVIAKERRGDYLGGTVQVIPHITDEIKRRIHEGAAGYDVAIVEIGGTVGDIESLPFLEAIRQMRSQLGRNNTLFAHLSYVPYIAAAGEIKTKPTQHTVKEMLSIGLQPDILICRMDRKMPADERRKIALFCNVEERAIVGSYDVDSIYECPEMLHDQGIDNIITEQLQLNVQQADLTAWKKIVHAVKNPKHTVKIAMVGKYVDLTESYKSLIEALKHAGIHTETDVQITFVDSESIEKNKGDVSVLKDMDAILVPGGFGSRGVEGKIAAVRYARENNVPYLGICLGMQIALIEYARDVAGLKGANSTEFDLKCAAPVVALIDEWQTADGSVETRDESADLGGTMRLGAQEVELKAGSLAVKIYGSGHIRERHRHRYEVNNNYVSALEQAGLVIGGVSAGRERLVETIELPNHPWFFACQFHPEFTSNPRKGHPLFTAFVKAALNNKKA</sequence>
<name>PYRG_NEIG1</name>
<gene>
    <name evidence="1" type="primary">pyrG</name>
    <name type="ordered locus">NGO_1212</name>
</gene>
<comment type="function">
    <text evidence="1">Catalyzes the ATP-dependent amination of UTP to CTP with either L-glutamine or ammonia as the source of nitrogen. Regulates intracellular CTP levels through interactions with the four ribonucleotide triphosphates.</text>
</comment>
<comment type="catalytic activity">
    <reaction evidence="1">
        <text>UTP + L-glutamine + ATP + H2O = CTP + L-glutamate + ADP + phosphate + 2 H(+)</text>
        <dbReference type="Rhea" id="RHEA:26426"/>
        <dbReference type="ChEBI" id="CHEBI:15377"/>
        <dbReference type="ChEBI" id="CHEBI:15378"/>
        <dbReference type="ChEBI" id="CHEBI:29985"/>
        <dbReference type="ChEBI" id="CHEBI:30616"/>
        <dbReference type="ChEBI" id="CHEBI:37563"/>
        <dbReference type="ChEBI" id="CHEBI:43474"/>
        <dbReference type="ChEBI" id="CHEBI:46398"/>
        <dbReference type="ChEBI" id="CHEBI:58359"/>
        <dbReference type="ChEBI" id="CHEBI:456216"/>
        <dbReference type="EC" id="6.3.4.2"/>
    </reaction>
</comment>
<comment type="catalytic activity">
    <reaction evidence="1">
        <text>L-glutamine + H2O = L-glutamate + NH4(+)</text>
        <dbReference type="Rhea" id="RHEA:15889"/>
        <dbReference type="ChEBI" id="CHEBI:15377"/>
        <dbReference type="ChEBI" id="CHEBI:28938"/>
        <dbReference type="ChEBI" id="CHEBI:29985"/>
        <dbReference type="ChEBI" id="CHEBI:58359"/>
    </reaction>
</comment>
<comment type="catalytic activity">
    <reaction evidence="1">
        <text>UTP + NH4(+) + ATP = CTP + ADP + phosphate + 2 H(+)</text>
        <dbReference type="Rhea" id="RHEA:16597"/>
        <dbReference type="ChEBI" id="CHEBI:15378"/>
        <dbReference type="ChEBI" id="CHEBI:28938"/>
        <dbReference type="ChEBI" id="CHEBI:30616"/>
        <dbReference type="ChEBI" id="CHEBI:37563"/>
        <dbReference type="ChEBI" id="CHEBI:43474"/>
        <dbReference type="ChEBI" id="CHEBI:46398"/>
        <dbReference type="ChEBI" id="CHEBI:456216"/>
    </reaction>
</comment>
<comment type="activity regulation">
    <text evidence="1">Allosterically activated by GTP, when glutamine is the substrate; GTP has no effect on the reaction when ammonia is the substrate. The allosteric effector GTP functions by stabilizing the protein conformation that binds the tetrahedral intermediate(s) formed during glutamine hydrolysis. Inhibited by the product CTP, via allosteric rather than competitive inhibition.</text>
</comment>
<comment type="pathway">
    <text evidence="1">Pyrimidine metabolism; CTP biosynthesis via de novo pathway; CTP from UDP: step 2/2.</text>
</comment>
<comment type="subunit">
    <text evidence="1">Homotetramer.</text>
</comment>
<comment type="miscellaneous">
    <text evidence="1">CTPSs have evolved a hybrid strategy for distinguishing between UTP and CTP. The overlapping regions of the product feedback inhibitory and substrate sites recognize a common feature in both compounds, the triphosphate moiety. To differentiate isosteric substrate and product pyrimidine rings, an additional pocket far from the expected kinase/ligase catalytic site, specifically recognizes the cytosine and ribose portions of the product inhibitor.</text>
</comment>
<comment type="similarity">
    <text evidence="1">Belongs to the CTP synthase family.</text>
</comment>
<organism>
    <name type="scientific">Neisseria gonorrhoeae (strain ATCC 700825 / FA 1090)</name>
    <dbReference type="NCBI Taxonomy" id="242231"/>
    <lineage>
        <taxon>Bacteria</taxon>
        <taxon>Pseudomonadati</taxon>
        <taxon>Pseudomonadota</taxon>
        <taxon>Betaproteobacteria</taxon>
        <taxon>Neisseriales</taxon>
        <taxon>Neisseriaceae</taxon>
        <taxon>Neisseria</taxon>
    </lineage>
</organism>
<reference key="1">
    <citation type="submission" date="2003-03" db="EMBL/GenBank/DDBJ databases">
        <title>The complete genome sequence of Neisseria gonorrhoeae.</title>
        <authorList>
            <person name="Lewis L.A."/>
            <person name="Gillaspy A.F."/>
            <person name="McLaughlin R.E."/>
            <person name="Gipson M."/>
            <person name="Ducey T.F."/>
            <person name="Ownbey T."/>
            <person name="Hartman K."/>
            <person name="Nydick C."/>
            <person name="Carson M.B."/>
            <person name="Vaughn J."/>
            <person name="Thomson C."/>
            <person name="Song L."/>
            <person name="Lin S."/>
            <person name="Yuan X."/>
            <person name="Najar F."/>
            <person name="Zhan M."/>
            <person name="Ren Q."/>
            <person name="Zhu H."/>
            <person name="Qi S."/>
            <person name="Kenton S.M."/>
            <person name="Lai H."/>
            <person name="White J.D."/>
            <person name="Clifton S."/>
            <person name="Roe B.A."/>
            <person name="Dyer D.W."/>
        </authorList>
    </citation>
    <scope>NUCLEOTIDE SEQUENCE [LARGE SCALE GENOMIC DNA]</scope>
    <source>
        <strain>ATCC 700825 / FA 1090</strain>
    </source>
</reference>
<accession>Q5F7G6</accession>
<feature type="chain" id="PRO_0000266160" description="CTP synthase">
    <location>
        <begin position="1"/>
        <end position="544"/>
    </location>
</feature>
<feature type="domain" description="Glutamine amidotransferase type-1" evidence="1">
    <location>
        <begin position="290"/>
        <end position="544"/>
    </location>
</feature>
<feature type="region of interest" description="Amidoligase domain" evidence="1">
    <location>
        <begin position="1"/>
        <end position="265"/>
    </location>
</feature>
<feature type="active site" description="Nucleophile; for glutamine hydrolysis" evidence="1">
    <location>
        <position position="380"/>
    </location>
</feature>
<feature type="active site" evidence="1">
    <location>
        <position position="517"/>
    </location>
</feature>
<feature type="active site" evidence="1">
    <location>
        <position position="519"/>
    </location>
</feature>
<feature type="binding site" evidence="1">
    <location>
        <position position="13"/>
    </location>
    <ligand>
        <name>CTP</name>
        <dbReference type="ChEBI" id="CHEBI:37563"/>
        <note>allosteric inhibitor</note>
    </ligand>
</feature>
<feature type="binding site" evidence="1">
    <location>
        <position position="13"/>
    </location>
    <ligand>
        <name>UTP</name>
        <dbReference type="ChEBI" id="CHEBI:46398"/>
    </ligand>
</feature>
<feature type="binding site" evidence="1">
    <location>
        <begin position="14"/>
        <end position="19"/>
    </location>
    <ligand>
        <name>ATP</name>
        <dbReference type="ChEBI" id="CHEBI:30616"/>
    </ligand>
</feature>
<feature type="binding site" evidence="1">
    <location>
        <position position="71"/>
    </location>
    <ligand>
        <name>ATP</name>
        <dbReference type="ChEBI" id="CHEBI:30616"/>
    </ligand>
</feature>
<feature type="binding site" evidence="1">
    <location>
        <position position="71"/>
    </location>
    <ligand>
        <name>Mg(2+)</name>
        <dbReference type="ChEBI" id="CHEBI:18420"/>
    </ligand>
</feature>
<feature type="binding site" evidence="1">
    <location>
        <position position="139"/>
    </location>
    <ligand>
        <name>Mg(2+)</name>
        <dbReference type="ChEBI" id="CHEBI:18420"/>
    </ligand>
</feature>
<feature type="binding site" evidence="1">
    <location>
        <begin position="146"/>
        <end position="148"/>
    </location>
    <ligand>
        <name>CTP</name>
        <dbReference type="ChEBI" id="CHEBI:37563"/>
        <note>allosteric inhibitor</note>
    </ligand>
</feature>
<feature type="binding site" evidence="1">
    <location>
        <begin position="186"/>
        <end position="191"/>
    </location>
    <ligand>
        <name>CTP</name>
        <dbReference type="ChEBI" id="CHEBI:37563"/>
        <note>allosteric inhibitor</note>
    </ligand>
</feature>
<feature type="binding site" evidence="1">
    <location>
        <begin position="186"/>
        <end position="191"/>
    </location>
    <ligand>
        <name>UTP</name>
        <dbReference type="ChEBI" id="CHEBI:46398"/>
    </ligand>
</feature>
<feature type="binding site" evidence="1">
    <location>
        <position position="222"/>
    </location>
    <ligand>
        <name>CTP</name>
        <dbReference type="ChEBI" id="CHEBI:37563"/>
        <note>allosteric inhibitor</note>
    </ligand>
</feature>
<feature type="binding site" evidence="1">
    <location>
        <position position="222"/>
    </location>
    <ligand>
        <name>UTP</name>
        <dbReference type="ChEBI" id="CHEBI:46398"/>
    </ligand>
</feature>
<feature type="binding site" evidence="1">
    <location>
        <position position="353"/>
    </location>
    <ligand>
        <name>L-glutamine</name>
        <dbReference type="ChEBI" id="CHEBI:58359"/>
    </ligand>
</feature>
<feature type="binding site" evidence="1">
    <location>
        <begin position="381"/>
        <end position="384"/>
    </location>
    <ligand>
        <name>L-glutamine</name>
        <dbReference type="ChEBI" id="CHEBI:58359"/>
    </ligand>
</feature>
<feature type="binding site" evidence="1">
    <location>
        <position position="404"/>
    </location>
    <ligand>
        <name>L-glutamine</name>
        <dbReference type="ChEBI" id="CHEBI:58359"/>
    </ligand>
</feature>
<feature type="binding site" evidence="1">
    <location>
        <position position="471"/>
    </location>
    <ligand>
        <name>L-glutamine</name>
        <dbReference type="ChEBI" id="CHEBI:58359"/>
    </ligand>
</feature>
<protein>
    <recommendedName>
        <fullName evidence="1">CTP synthase</fullName>
        <ecNumber evidence="1">6.3.4.2</ecNumber>
    </recommendedName>
    <alternativeName>
        <fullName evidence="1">Cytidine 5'-triphosphate synthase</fullName>
    </alternativeName>
    <alternativeName>
        <fullName evidence="1">Cytidine triphosphate synthetase</fullName>
        <shortName evidence="1">CTP synthetase</shortName>
        <shortName evidence="1">CTPS</shortName>
    </alternativeName>
    <alternativeName>
        <fullName evidence="1">UTP--ammonia ligase</fullName>
    </alternativeName>
</protein>
<evidence type="ECO:0000255" key="1">
    <source>
        <dbReference type="HAMAP-Rule" id="MF_01227"/>
    </source>
</evidence>
<keyword id="KW-0067">ATP-binding</keyword>
<keyword id="KW-0315">Glutamine amidotransferase</keyword>
<keyword id="KW-0436">Ligase</keyword>
<keyword id="KW-0460">Magnesium</keyword>
<keyword id="KW-0479">Metal-binding</keyword>
<keyword id="KW-0547">Nucleotide-binding</keyword>
<keyword id="KW-0665">Pyrimidine biosynthesis</keyword>
<keyword id="KW-1185">Reference proteome</keyword>
<dbReference type="EC" id="6.3.4.2" evidence="1"/>
<dbReference type="EMBL" id="AE004969">
    <property type="protein sequence ID" value="AAW89871.1"/>
    <property type="molecule type" value="Genomic_DNA"/>
</dbReference>
<dbReference type="RefSeq" id="WP_003689652.1">
    <property type="nucleotide sequence ID" value="NC_002946.2"/>
</dbReference>
<dbReference type="RefSeq" id="YP_208283.1">
    <property type="nucleotide sequence ID" value="NC_002946.2"/>
</dbReference>
<dbReference type="SMR" id="Q5F7G6"/>
<dbReference type="STRING" id="242231.NGO_1212"/>
<dbReference type="KEGG" id="ngo:NGO_1212"/>
<dbReference type="PATRIC" id="fig|242231.10.peg.1424"/>
<dbReference type="HOGENOM" id="CLU_011675_5_0_4"/>
<dbReference type="UniPathway" id="UPA00159">
    <property type="reaction ID" value="UER00277"/>
</dbReference>
<dbReference type="Proteomes" id="UP000000535">
    <property type="component" value="Chromosome"/>
</dbReference>
<dbReference type="GO" id="GO:0005829">
    <property type="term" value="C:cytosol"/>
    <property type="evidence" value="ECO:0007669"/>
    <property type="project" value="TreeGrafter"/>
</dbReference>
<dbReference type="GO" id="GO:0005524">
    <property type="term" value="F:ATP binding"/>
    <property type="evidence" value="ECO:0007669"/>
    <property type="project" value="UniProtKB-KW"/>
</dbReference>
<dbReference type="GO" id="GO:0003883">
    <property type="term" value="F:CTP synthase activity"/>
    <property type="evidence" value="ECO:0007669"/>
    <property type="project" value="UniProtKB-UniRule"/>
</dbReference>
<dbReference type="GO" id="GO:0004359">
    <property type="term" value="F:glutaminase activity"/>
    <property type="evidence" value="ECO:0007669"/>
    <property type="project" value="RHEA"/>
</dbReference>
<dbReference type="GO" id="GO:0042802">
    <property type="term" value="F:identical protein binding"/>
    <property type="evidence" value="ECO:0007669"/>
    <property type="project" value="TreeGrafter"/>
</dbReference>
<dbReference type="GO" id="GO:0046872">
    <property type="term" value="F:metal ion binding"/>
    <property type="evidence" value="ECO:0007669"/>
    <property type="project" value="UniProtKB-KW"/>
</dbReference>
<dbReference type="GO" id="GO:0044210">
    <property type="term" value="P:'de novo' CTP biosynthetic process"/>
    <property type="evidence" value="ECO:0007669"/>
    <property type="project" value="UniProtKB-UniRule"/>
</dbReference>
<dbReference type="GO" id="GO:0019856">
    <property type="term" value="P:pyrimidine nucleobase biosynthetic process"/>
    <property type="evidence" value="ECO:0007669"/>
    <property type="project" value="TreeGrafter"/>
</dbReference>
<dbReference type="CDD" id="cd03113">
    <property type="entry name" value="CTPS_N"/>
    <property type="match status" value="1"/>
</dbReference>
<dbReference type="CDD" id="cd01746">
    <property type="entry name" value="GATase1_CTP_Synthase"/>
    <property type="match status" value="1"/>
</dbReference>
<dbReference type="FunFam" id="3.40.50.300:FF:000009">
    <property type="entry name" value="CTP synthase"/>
    <property type="match status" value="1"/>
</dbReference>
<dbReference type="FunFam" id="3.40.50.880:FF:000002">
    <property type="entry name" value="CTP synthase"/>
    <property type="match status" value="1"/>
</dbReference>
<dbReference type="Gene3D" id="3.40.50.880">
    <property type="match status" value="1"/>
</dbReference>
<dbReference type="Gene3D" id="3.40.50.300">
    <property type="entry name" value="P-loop containing nucleotide triphosphate hydrolases"/>
    <property type="match status" value="1"/>
</dbReference>
<dbReference type="HAMAP" id="MF_01227">
    <property type="entry name" value="PyrG"/>
    <property type="match status" value="1"/>
</dbReference>
<dbReference type="InterPro" id="IPR029062">
    <property type="entry name" value="Class_I_gatase-like"/>
</dbReference>
<dbReference type="InterPro" id="IPR004468">
    <property type="entry name" value="CTP_synthase"/>
</dbReference>
<dbReference type="InterPro" id="IPR017456">
    <property type="entry name" value="CTP_synthase_N"/>
</dbReference>
<dbReference type="InterPro" id="IPR017926">
    <property type="entry name" value="GATASE"/>
</dbReference>
<dbReference type="InterPro" id="IPR033828">
    <property type="entry name" value="GATase1_CTP_Synthase"/>
</dbReference>
<dbReference type="InterPro" id="IPR027417">
    <property type="entry name" value="P-loop_NTPase"/>
</dbReference>
<dbReference type="NCBIfam" id="NF003792">
    <property type="entry name" value="PRK05380.1"/>
    <property type="match status" value="1"/>
</dbReference>
<dbReference type="NCBIfam" id="TIGR00337">
    <property type="entry name" value="PyrG"/>
    <property type="match status" value="1"/>
</dbReference>
<dbReference type="PANTHER" id="PTHR11550">
    <property type="entry name" value="CTP SYNTHASE"/>
    <property type="match status" value="1"/>
</dbReference>
<dbReference type="PANTHER" id="PTHR11550:SF0">
    <property type="entry name" value="CTP SYNTHASE-RELATED"/>
    <property type="match status" value="1"/>
</dbReference>
<dbReference type="Pfam" id="PF06418">
    <property type="entry name" value="CTP_synth_N"/>
    <property type="match status" value="1"/>
</dbReference>
<dbReference type="Pfam" id="PF00117">
    <property type="entry name" value="GATase"/>
    <property type="match status" value="1"/>
</dbReference>
<dbReference type="SUPFAM" id="SSF52317">
    <property type="entry name" value="Class I glutamine amidotransferase-like"/>
    <property type="match status" value="1"/>
</dbReference>
<dbReference type="SUPFAM" id="SSF52540">
    <property type="entry name" value="P-loop containing nucleoside triphosphate hydrolases"/>
    <property type="match status" value="1"/>
</dbReference>
<dbReference type="PROSITE" id="PS51273">
    <property type="entry name" value="GATASE_TYPE_1"/>
    <property type="match status" value="1"/>
</dbReference>